<comment type="function">
    <text>Pulmonary surfactant associated proteins promote alveolar stability by lowering the surface tension at the air-liquid interface in the peripheral air spaces.</text>
</comment>
<comment type="subcellular location">
    <subcellularLocation>
        <location>Secreted</location>
        <location>Extracellular space</location>
        <location>Surface film</location>
    </subcellularLocation>
</comment>
<comment type="miscellaneous">
    <text>Pulmonary surfactant consists of 90% lipid and 10% protein. There are 4 surfactant-associated proteins: 2 collagenous, carbohydrate-binding glycoproteins (SP-A and SP-D) and 2 small hydrophobic proteins (SP-B and SP-C).</text>
</comment>
<evidence type="ECO:0000250" key="1"/>
<evidence type="ECO:0000250" key="2">
    <source>
        <dbReference type="UniProtKB" id="P11686"/>
    </source>
</evidence>
<evidence type="ECO:0000255" key="3">
    <source>
        <dbReference type="PROSITE-ProRule" id="PRU00255"/>
    </source>
</evidence>
<feature type="propeptide" id="PRO_0000033480" evidence="1">
    <location>
        <begin position="1"/>
        <end position="23"/>
    </location>
</feature>
<feature type="chain" id="PRO_0000033481" description="Surfactant protein C">
    <location>
        <begin position="24"/>
        <end position="58"/>
    </location>
</feature>
<feature type="propeptide" id="PRO_0000033482">
    <location>
        <begin position="59"/>
        <end position="191"/>
    </location>
</feature>
<feature type="domain" description="BRICHOS" evidence="3">
    <location>
        <begin position="94"/>
        <end position="191"/>
    </location>
</feature>
<feature type="lipid moiety-binding region" description="S-palmitoyl cysteine" evidence="1">
    <location>
        <position position="28"/>
    </location>
</feature>
<feature type="lipid moiety-binding region" description="S-palmitoyl cysteine" evidence="1">
    <location>
        <position position="29"/>
    </location>
</feature>
<feature type="disulfide bond" evidence="1">
    <location>
        <begin position="121"/>
        <end position="183"/>
    </location>
</feature>
<organism>
    <name type="scientific">Macaca mulatta</name>
    <name type="common">Rhesus macaque</name>
    <dbReference type="NCBI Taxonomy" id="9544"/>
    <lineage>
        <taxon>Eukaryota</taxon>
        <taxon>Metazoa</taxon>
        <taxon>Chordata</taxon>
        <taxon>Craniata</taxon>
        <taxon>Vertebrata</taxon>
        <taxon>Euteleostomi</taxon>
        <taxon>Mammalia</taxon>
        <taxon>Eutheria</taxon>
        <taxon>Euarchontoglires</taxon>
        <taxon>Primates</taxon>
        <taxon>Haplorrhini</taxon>
        <taxon>Catarrhini</taxon>
        <taxon>Cercopithecidae</taxon>
        <taxon>Cercopithecinae</taxon>
        <taxon>Macaca</taxon>
    </lineage>
</organism>
<sequence length="191" mass="20584">MDVGSKEVLMESPPDYSAAPRGRFGIPCCPVHLKRLLIVVVVVVLVVVVIVGALLMGLHMSQKHTEMVLEMSIGAPEAQQHLARSGHLVTTATFSFGSTGLVVYDYQRLLIAYKPAPGTWCYIMKTAPESIPSLEALTRKVQNFQAKPAVPTSKLDQVEGRDAGSAPSRGDLAFLGMAVSTLCGEVPLYYI</sequence>
<keyword id="KW-1015">Disulfide bond</keyword>
<keyword id="KW-0305">Gaseous exchange</keyword>
<keyword id="KW-0449">Lipoprotein</keyword>
<keyword id="KW-0564">Palmitate</keyword>
<keyword id="KW-1185">Reference proteome</keyword>
<keyword id="KW-0964">Secreted</keyword>
<keyword id="KW-0767">Surface film</keyword>
<gene>
    <name type="primary">SFTPC</name>
    <name type="synonym">SFTP2</name>
</gene>
<reference key="1">
    <citation type="submission" date="1994-05" db="EMBL/GenBank/DDBJ databases">
        <title>Cloning and expression of surfactant protein C (SP-C) cDNA in monkey lung after ozone exposure.</title>
        <authorList>
            <person name="An G."/>
            <person name="Luo G."/>
            <person name="Zhao Y."/>
            <person name="Plopper C."/>
            <person name="Wu R."/>
        </authorList>
    </citation>
    <scope>NUCLEOTIDE SEQUENCE [MRNA]</scope>
    <source>
        <tissue>Lung</tissue>
    </source>
</reference>
<proteinExistence type="evidence at transcript level"/>
<dbReference type="EMBL" id="U06694">
    <property type="protein sequence ID" value="AAA17870.1"/>
    <property type="molecule type" value="mRNA"/>
</dbReference>
<dbReference type="PIR" id="G02964">
    <property type="entry name" value="G02964"/>
</dbReference>
<dbReference type="RefSeq" id="NP_001036224.1">
    <property type="nucleotide sequence ID" value="NM_001042759.1"/>
</dbReference>
<dbReference type="SMR" id="P55152"/>
<dbReference type="FunCoup" id="P55152">
    <property type="interactions" value="63"/>
</dbReference>
<dbReference type="STRING" id="9544.ENSMMUP00000054606"/>
<dbReference type="PaxDb" id="9544-ENSMMUP00000017109"/>
<dbReference type="GeneID" id="707696"/>
<dbReference type="KEGG" id="mcc:707696"/>
<dbReference type="CTD" id="6440"/>
<dbReference type="eggNOG" id="ENOG502S6QH">
    <property type="taxonomic scope" value="Eukaryota"/>
</dbReference>
<dbReference type="InParanoid" id="P55152"/>
<dbReference type="OrthoDB" id="9888901at2759"/>
<dbReference type="Proteomes" id="UP000006718">
    <property type="component" value="Unassembled WGS sequence"/>
</dbReference>
<dbReference type="GO" id="GO:0097208">
    <property type="term" value="C:alveolar lamellar body"/>
    <property type="evidence" value="ECO:0000318"/>
    <property type="project" value="GO_Central"/>
</dbReference>
<dbReference type="GO" id="GO:0005615">
    <property type="term" value="C:extracellular space"/>
    <property type="evidence" value="ECO:0000318"/>
    <property type="project" value="GO_Central"/>
</dbReference>
<dbReference type="GO" id="GO:0007585">
    <property type="term" value="P:respiratory gaseous exchange by respiratory system"/>
    <property type="evidence" value="ECO:0007669"/>
    <property type="project" value="UniProtKB-KW"/>
</dbReference>
<dbReference type="Gene3D" id="3.30.390.150">
    <property type="match status" value="1"/>
</dbReference>
<dbReference type="InterPro" id="IPR007084">
    <property type="entry name" value="BRICHOS_dom"/>
</dbReference>
<dbReference type="InterPro" id="IPR001729">
    <property type="entry name" value="SP-C"/>
</dbReference>
<dbReference type="InterPro" id="IPR018051">
    <property type="entry name" value="SP-C_palmitoylation_site"/>
</dbReference>
<dbReference type="InterPro" id="IPR015091">
    <property type="entry name" value="Surfactant_protein_propep"/>
</dbReference>
<dbReference type="PANTHER" id="PTHR10800">
    <property type="entry name" value="PULMONARY SURFACTANT-ASSOCIATED PROTEIN C"/>
    <property type="match status" value="1"/>
</dbReference>
<dbReference type="PANTHER" id="PTHR10800:SF4">
    <property type="entry name" value="PULMONARY SURFACTANT-ASSOCIATED PROTEIN C"/>
    <property type="match status" value="1"/>
</dbReference>
<dbReference type="Pfam" id="PF04089">
    <property type="entry name" value="BRICHOS"/>
    <property type="match status" value="1"/>
</dbReference>
<dbReference type="Pfam" id="PF08999">
    <property type="entry name" value="SP_C-Propep"/>
    <property type="match status" value="1"/>
</dbReference>
<dbReference type="SMART" id="SM01039">
    <property type="entry name" value="BRICHOS"/>
    <property type="match status" value="1"/>
</dbReference>
<dbReference type="SMART" id="SM00019">
    <property type="entry name" value="SF_P"/>
    <property type="match status" value="1"/>
</dbReference>
<dbReference type="PROSITE" id="PS50869">
    <property type="entry name" value="BRICHOS"/>
    <property type="match status" value="1"/>
</dbReference>
<dbReference type="PROSITE" id="PS00341">
    <property type="entry name" value="SURFACT_PALMITOYL"/>
    <property type="match status" value="1"/>
</dbReference>
<protein>
    <recommendedName>
        <fullName evidence="2">Surfactant protein C</fullName>
        <shortName>SP-C</shortName>
    </recommendedName>
    <alternativeName>
        <fullName>Pulmonary surfactant-associated protein C</fullName>
    </alternativeName>
    <alternativeName>
        <fullName>Pulmonary surfactant-associated proteolipid SPL(Val)</fullName>
    </alternativeName>
</protein>
<name>PSPC_MACMU</name>
<accession>P55152</accession>